<evidence type="ECO:0000255" key="1">
    <source>
        <dbReference type="HAMAP-Rule" id="MF_00817"/>
    </source>
</evidence>
<name>QUEF_BURO0</name>
<feature type="chain" id="PRO_1000193214" description="NADPH-dependent 7-cyano-7-deazaguanine reductase">
    <location>
        <begin position="1"/>
        <end position="276"/>
    </location>
</feature>
<feature type="active site" description="Thioimide intermediate" evidence="1">
    <location>
        <position position="183"/>
    </location>
</feature>
<feature type="active site" description="Proton donor" evidence="1">
    <location>
        <position position="190"/>
    </location>
</feature>
<feature type="binding site" evidence="1">
    <location>
        <begin position="80"/>
        <end position="82"/>
    </location>
    <ligand>
        <name>substrate</name>
    </ligand>
</feature>
<feature type="binding site" evidence="1">
    <location>
        <begin position="82"/>
        <end position="83"/>
    </location>
    <ligand>
        <name>NADPH</name>
        <dbReference type="ChEBI" id="CHEBI:57783"/>
    </ligand>
</feature>
<feature type="binding site" evidence="1">
    <location>
        <begin position="222"/>
        <end position="223"/>
    </location>
    <ligand>
        <name>substrate</name>
    </ligand>
</feature>
<feature type="binding site" evidence="1">
    <location>
        <begin position="251"/>
        <end position="252"/>
    </location>
    <ligand>
        <name>NADPH</name>
        <dbReference type="ChEBI" id="CHEBI:57783"/>
    </ligand>
</feature>
<keyword id="KW-0963">Cytoplasm</keyword>
<keyword id="KW-0521">NADP</keyword>
<keyword id="KW-0560">Oxidoreductase</keyword>
<keyword id="KW-0671">Queuosine biosynthesis</keyword>
<sequence>MNPEHSPLGKATVYAAQYDASLLFPIPRAGAREQLGITSALPFFGTDIWNAYELSWLNTRGKPQVAIATFYVPAESPNIVESKSFKLYLGSFAQSKFDSVDAVRDVLKRDVSAACGASVSVQLVSAHDFAKLEMDELDGLSLDRLDLDTDVYEPDPSLLSAADGENEAPVEETLVSDLLRSNCPVTGQPDWGSVQIHYVGPQIDHAGLLRYIISFRNHTGFHEQCVERIFLDIMHACKPVKLAVYARYTRRGGLDINPFRTNYNQPMPDNARTARQ</sequence>
<gene>
    <name evidence="1" type="primary">queF</name>
    <name type="ordered locus">Bcenmc03_2764</name>
</gene>
<reference key="1">
    <citation type="submission" date="2008-02" db="EMBL/GenBank/DDBJ databases">
        <title>Complete sequence of chromosome 1 of Burkholderia cenocepacia MC0-3.</title>
        <authorList>
            <person name="Copeland A."/>
            <person name="Lucas S."/>
            <person name="Lapidus A."/>
            <person name="Barry K."/>
            <person name="Bruce D."/>
            <person name="Goodwin L."/>
            <person name="Glavina del Rio T."/>
            <person name="Dalin E."/>
            <person name="Tice H."/>
            <person name="Pitluck S."/>
            <person name="Chain P."/>
            <person name="Malfatti S."/>
            <person name="Shin M."/>
            <person name="Vergez L."/>
            <person name="Schmutz J."/>
            <person name="Larimer F."/>
            <person name="Land M."/>
            <person name="Hauser L."/>
            <person name="Kyrpides N."/>
            <person name="Mikhailova N."/>
            <person name="Tiedje J."/>
            <person name="Richardson P."/>
        </authorList>
    </citation>
    <scope>NUCLEOTIDE SEQUENCE [LARGE SCALE GENOMIC DNA]</scope>
    <source>
        <strain>MC0-3</strain>
    </source>
</reference>
<comment type="function">
    <text evidence="1">Catalyzes the NADPH-dependent reduction of 7-cyano-7-deazaguanine (preQ0) to 7-aminomethyl-7-deazaguanine (preQ1).</text>
</comment>
<comment type="catalytic activity">
    <reaction evidence="1">
        <text>7-aminomethyl-7-carbaguanine + 2 NADP(+) = 7-cyano-7-deazaguanine + 2 NADPH + 3 H(+)</text>
        <dbReference type="Rhea" id="RHEA:13409"/>
        <dbReference type="ChEBI" id="CHEBI:15378"/>
        <dbReference type="ChEBI" id="CHEBI:45075"/>
        <dbReference type="ChEBI" id="CHEBI:57783"/>
        <dbReference type="ChEBI" id="CHEBI:58349"/>
        <dbReference type="ChEBI" id="CHEBI:58703"/>
        <dbReference type="EC" id="1.7.1.13"/>
    </reaction>
</comment>
<comment type="pathway">
    <text evidence="1">tRNA modification; tRNA-queuosine biosynthesis.</text>
</comment>
<comment type="subunit">
    <text evidence="1">Homodimer.</text>
</comment>
<comment type="subcellular location">
    <subcellularLocation>
        <location evidence="1">Cytoplasm</location>
    </subcellularLocation>
</comment>
<comment type="similarity">
    <text evidence="1">Belongs to the GTP cyclohydrolase I family. QueF type 2 subfamily.</text>
</comment>
<accession>B1JYK1</accession>
<dbReference type="EC" id="1.7.1.13" evidence="1"/>
<dbReference type="EMBL" id="CP000958">
    <property type="protein sequence ID" value="ACA91924.1"/>
    <property type="molecule type" value="Genomic_DNA"/>
</dbReference>
<dbReference type="RefSeq" id="WP_012329212.1">
    <property type="nucleotide sequence ID" value="NC_010508.1"/>
</dbReference>
<dbReference type="SMR" id="B1JYK1"/>
<dbReference type="GeneID" id="83049549"/>
<dbReference type="KEGG" id="bcm:Bcenmc03_2764"/>
<dbReference type="HOGENOM" id="CLU_054738_0_0_4"/>
<dbReference type="UniPathway" id="UPA00392"/>
<dbReference type="Proteomes" id="UP000002169">
    <property type="component" value="Chromosome 1"/>
</dbReference>
<dbReference type="GO" id="GO:0005737">
    <property type="term" value="C:cytoplasm"/>
    <property type="evidence" value="ECO:0007669"/>
    <property type="project" value="UniProtKB-SubCell"/>
</dbReference>
<dbReference type="GO" id="GO:0033739">
    <property type="term" value="F:preQ1 synthase activity"/>
    <property type="evidence" value="ECO:0007669"/>
    <property type="project" value="UniProtKB-UniRule"/>
</dbReference>
<dbReference type="GO" id="GO:0008616">
    <property type="term" value="P:queuosine biosynthetic process"/>
    <property type="evidence" value="ECO:0007669"/>
    <property type="project" value="UniProtKB-UniRule"/>
</dbReference>
<dbReference type="GO" id="GO:0006400">
    <property type="term" value="P:tRNA modification"/>
    <property type="evidence" value="ECO:0007669"/>
    <property type="project" value="UniProtKB-UniRule"/>
</dbReference>
<dbReference type="Gene3D" id="3.30.1130.10">
    <property type="match status" value="2"/>
</dbReference>
<dbReference type="HAMAP" id="MF_00817">
    <property type="entry name" value="QueF_type2"/>
    <property type="match status" value="1"/>
</dbReference>
<dbReference type="InterPro" id="IPR043133">
    <property type="entry name" value="GTP-CH-I_C/QueF"/>
</dbReference>
<dbReference type="InterPro" id="IPR050084">
    <property type="entry name" value="NADPH_dep_7-cyano-7-deazaG_red"/>
</dbReference>
<dbReference type="InterPro" id="IPR029500">
    <property type="entry name" value="QueF"/>
</dbReference>
<dbReference type="InterPro" id="IPR029139">
    <property type="entry name" value="QueF_N"/>
</dbReference>
<dbReference type="InterPro" id="IPR016428">
    <property type="entry name" value="QueF_type2"/>
</dbReference>
<dbReference type="NCBIfam" id="TIGR03138">
    <property type="entry name" value="QueF"/>
    <property type="match status" value="1"/>
</dbReference>
<dbReference type="PANTHER" id="PTHR34354">
    <property type="entry name" value="NADPH-DEPENDENT 7-CYANO-7-DEAZAGUANINE REDUCTASE"/>
    <property type="match status" value="1"/>
</dbReference>
<dbReference type="PANTHER" id="PTHR34354:SF1">
    <property type="entry name" value="NADPH-DEPENDENT 7-CYANO-7-DEAZAGUANINE REDUCTASE"/>
    <property type="match status" value="1"/>
</dbReference>
<dbReference type="Pfam" id="PF14489">
    <property type="entry name" value="QueF"/>
    <property type="match status" value="1"/>
</dbReference>
<dbReference type="Pfam" id="PF14819">
    <property type="entry name" value="QueF_N"/>
    <property type="match status" value="1"/>
</dbReference>
<dbReference type="PIRSF" id="PIRSF004750">
    <property type="entry name" value="Nitrile_oxidored_YqcD_prd"/>
    <property type="match status" value="1"/>
</dbReference>
<dbReference type="SUPFAM" id="SSF55620">
    <property type="entry name" value="Tetrahydrobiopterin biosynthesis enzymes-like"/>
    <property type="match status" value="1"/>
</dbReference>
<organism>
    <name type="scientific">Burkholderia orbicola (strain MC0-3)</name>
    <dbReference type="NCBI Taxonomy" id="406425"/>
    <lineage>
        <taxon>Bacteria</taxon>
        <taxon>Pseudomonadati</taxon>
        <taxon>Pseudomonadota</taxon>
        <taxon>Betaproteobacteria</taxon>
        <taxon>Burkholderiales</taxon>
        <taxon>Burkholderiaceae</taxon>
        <taxon>Burkholderia</taxon>
        <taxon>Burkholderia cepacia complex</taxon>
        <taxon>Burkholderia orbicola</taxon>
    </lineage>
</organism>
<proteinExistence type="inferred from homology"/>
<protein>
    <recommendedName>
        <fullName evidence="1">NADPH-dependent 7-cyano-7-deazaguanine reductase</fullName>
        <ecNumber evidence="1">1.7.1.13</ecNumber>
    </recommendedName>
    <alternativeName>
        <fullName evidence="1">7-cyano-7-carbaguanine reductase</fullName>
    </alternativeName>
    <alternativeName>
        <fullName evidence="1">NADPH-dependent nitrile oxidoreductase</fullName>
    </alternativeName>
    <alternativeName>
        <fullName evidence="1">PreQ(0) reductase</fullName>
    </alternativeName>
</protein>